<keyword id="KW-0378">Hydrolase</keyword>
<keyword id="KW-0408">Iron</keyword>
<keyword id="KW-0479">Metal-binding</keyword>
<keyword id="KW-0648">Protein biosynthesis</keyword>
<protein>
    <recommendedName>
        <fullName evidence="1">Peptide deformylase</fullName>
        <shortName evidence="1">PDF</shortName>
        <ecNumber evidence="1">3.5.1.88</ecNumber>
    </recommendedName>
    <alternativeName>
        <fullName evidence="1">Polypeptide deformylase</fullName>
    </alternativeName>
</protein>
<proteinExistence type="inferred from homology"/>
<feature type="chain" id="PRO_0000301060" description="Peptide deformylase">
    <location>
        <begin position="1"/>
        <end position="197"/>
    </location>
</feature>
<feature type="active site" evidence="1">
    <location>
        <position position="149"/>
    </location>
</feature>
<feature type="binding site" evidence="1">
    <location>
        <position position="106"/>
    </location>
    <ligand>
        <name>Fe cation</name>
        <dbReference type="ChEBI" id="CHEBI:24875"/>
    </ligand>
</feature>
<feature type="binding site" evidence="1">
    <location>
        <position position="148"/>
    </location>
    <ligand>
        <name>Fe cation</name>
        <dbReference type="ChEBI" id="CHEBI:24875"/>
    </ligand>
</feature>
<feature type="binding site" evidence="1">
    <location>
        <position position="152"/>
    </location>
    <ligand>
        <name>Fe cation</name>
        <dbReference type="ChEBI" id="CHEBI:24875"/>
    </ligand>
</feature>
<sequence>MAVVPIRIVGDPVLRTETTPIPVGDDGSLPAEVADLIRDLYETMDAANGVGLAANQIGVSQRVFVYDCPDSRGRAGRRRGVVINPVLETSDIPETMPDPDDDEEGCLSVPGEQFPTGRADWARVTGLDADGSPITVEGTGLFARMLQHETGHLDGFLYLDRLIGRHARAAKRAVKHNGWGVPGLSWTPGEDPDPFGH</sequence>
<organism>
    <name type="scientific">Mycobacterium sp. (strain JLS)</name>
    <dbReference type="NCBI Taxonomy" id="164757"/>
    <lineage>
        <taxon>Bacteria</taxon>
        <taxon>Bacillati</taxon>
        <taxon>Actinomycetota</taxon>
        <taxon>Actinomycetes</taxon>
        <taxon>Mycobacteriales</taxon>
        <taxon>Mycobacteriaceae</taxon>
        <taxon>Mycobacterium</taxon>
    </lineage>
</organism>
<reference key="1">
    <citation type="submission" date="2007-02" db="EMBL/GenBank/DDBJ databases">
        <title>Complete sequence of Mycobacterium sp. JLS.</title>
        <authorList>
            <consortium name="US DOE Joint Genome Institute"/>
            <person name="Copeland A."/>
            <person name="Lucas S."/>
            <person name="Lapidus A."/>
            <person name="Barry K."/>
            <person name="Detter J.C."/>
            <person name="Glavina del Rio T."/>
            <person name="Hammon N."/>
            <person name="Israni S."/>
            <person name="Dalin E."/>
            <person name="Tice H."/>
            <person name="Pitluck S."/>
            <person name="Chain P."/>
            <person name="Malfatti S."/>
            <person name="Shin M."/>
            <person name="Vergez L."/>
            <person name="Schmutz J."/>
            <person name="Larimer F."/>
            <person name="Land M."/>
            <person name="Hauser L."/>
            <person name="Kyrpides N."/>
            <person name="Mikhailova N."/>
            <person name="Miller C.D."/>
            <person name="Anderson A.J."/>
            <person name="Sims R.C."/>
            <person name="Richardson P."/>
        </authorList>
    </citation>
    <scope>NUCLEOTIDE SEQUENCE [LARGE SCALE GENOMIC DNA]</scope>
    <source>
        <strain>JLS</strain>
    </source>
</reference>
<accession>A3PTZ4</accession>
<evidence type="ECO:0000255" key="1">
    <source>
        <dbReference type="HAMAP-Rule" id="MF_00163"/>
    </source>
</evidence>
<gene>
    <name evidence="1" type="primary">def</name>
    <name type="ordered locus">Mjls_0559</name>
</gene>
<name>DEF_MYCSJ</name>
<dbReference type="EC" id="3.5.1.88" evidence="1"/>
<dbReference type="EMBL" id="CP000580">
    <property type="protein sequence ID" value="ABN96371.1"/>
    <property type="molecule type" value="Genomic_DNA"/>
</dbReference>
<dbReference type="SMR" id="A3PTZ4"/>
<dbReference type="KEGG" id="mjl:Mjls_0559"/>
<dbReference type="HOGENOM" id="CLU_061901_1_2_11"/>
<dbReference type="BioCyc" id="MSP164757:G1G8C-566-MONOMER"/>
<dbReference type="GO" id="GO:0046872">
    <property type="term" value="F:metal ion binding"/>
    <property type="evidence" value="ECO:0007669"/>
    <property type="project" value="UniProtKB-KW"/>
</dbReference>
<dbReference type="GO" id="GO:0042586">
    <property type="term" value="F:peptide deformylase activity"/>
    <property type="evidence" value="ECO:0007669"/>
    <property type="project" value="UniProtKB-UniRule"/>
</dbReference>
<dbReference type="GO" id="GO:0043686">
    <property type="term" value="P:co-translational protein modification"/>
    <property type="evidence" value="ECO:0007669"/>
    <property type="project" value="TreeGrafter"/>
</dbReference>
<dbReference type="GO" id="GO:0006412">
    <property type="term" value="P:translation"/>
    <property type="evidence" value="ECO:0007669"/>
    <property type="project" value="UniProtKB-UniRule"/>
</dbReference>
<dbReference type="CDD" id="cd00487">
    <property type="entry name" value="Pep_deformylase"/>
    <property type="match status" value="1"/>
</dbReference>
<dbReference type="Gene3D" id="3.90.45.10">
    <property type="entry name" value="Peptide deformylase"/>
    <property type="match status" value="1"/>
</dbReference>
<dbReference type="HAMAP" id="MF_00163">
    <property type="entry name" value="Pep_deformylase"/>
    <property type="match status" value="1"/>
</dbReference>
<dbReference type="InterPro" id="IPR023635">
    <property type="entry name" value="Peptide_deformylase"/>
</dbReference>
<dbReference type="InterPro" id="IPR036821">
    <property type="entry name" value="Peptide_deformylase_sf"/>
</dbReference>
<dbReference type="NCBIfam" id="TIGR00079">
    <property type="entry name" value="pept_deformyl"/>
    <property type="match status" value="1"/>
</dbReference>
<dbReference type="NCBIfam" id="NF001159">
    <property type="entry name" value="PRK00150.1-3"/>
    <property type="match status" value="1"/>
</dbReference>
<dbReference type="NCBIfam" id="NF009483">
    <property type="entry name" value="PRK12846.1-4"/>
    <property type="match status" value="1"/>
</dbReference>
<dbReference type="PANTHER" id="PTHR10458">
    <property type="entry name" value="PEPTIDE DEFORMYLASE"/>
    <property type="match status" value="1"/>
</dbReference>
<dbReference type="PANTHER" id="PTHR10458:SF2">
    <property type="entry name" value="PEPTIDE DEFORMYLASE, MITOCHONDRIAL"/>
    <property type="match status" value="1"/>
</dbReference>
<dbReference type="Pfam" id="PF01327">
    <property type="entry name" value="Pep_deformylase"/>
    <property type="match status" value="1"/>
</dbReference>
<dbReference type="PIRSF" id="PIRSF004749">
    <property type="entry name" value="Pep_def"/>
    <property type="match status" value="1"/>
</dbReference>
<dbReference type="PRINTS" id="PR01576">
    <property type="entry name" value="PDEFORMYLASE"/>
</dbReference>
<dbReference type="SUPFAM" id="SSF56420">
    <property type="entry name" value="Peptide deformylase"/>
    <property type="match status" value="1"/>
</dbReference>
<comment type="function">
    <text evidence="1">Removes the formyl group from the N-terminal Met of newly synthesized proteins. Requires at least a dipeptide for an efficient rate of reaction. N-terminal L-methionine is a prerequisite for activity but the enzyme has broad specificity at other positions.</text>
</comment>
<comment type="catalytic activity">
    <reaction evidence="1">
        <text>N-terminal N-formyl-L-methionyl-[peptide] + H2O = N-terminal L-methionyl-[peptide] + formate</text>
        <dbReference type="Rhea" id="RHEA:24420"/>
        <dbReference type="Rhea" id="RHEA-COMP:10639"/>
        <dbReference type="Rhea" id="RHEA-COMP:10640"/>
        <dbReference type="ChEBI" id="CHEBI:15377"/>
        <dbReference type="ChEBI" id="CHEBI:15740"/>
        <dbReference type="ChEBI" id="CHEBI:49298"/>
        <dbReference type="ChEBI" id="CHEBI:64731"/>
        <dbReference type="EC" id="3.5.1.88"/>
    </reaction>
</comment>
<comment type="cofactor">
    <cofactor evidence="1">
        <name>Fe(2+)</name>
        <dbReference type="ChEBI" id="CHEBI:29033"/>
    </cofactor>
    <text evidence="1">Binds 1 Fe(2+) ion.</text>
</comment>
<comment type="similarity">
    <text evidence="1">Belongs to the polypeptide deformylase family.</text>
</comment>